<gene>
    <name evidence="1" type="primary">glgB</name>
    <name type="ordered locus">VC_A0015/VC_A0016</name>
</gene>
<reference key="1">
    <citation type="journal article" date="2000" name="Nature">
        <title>DNA sequence of both chromosomes of the cholera pathogen Vibrio cholerae.</title>
        <authorList>
            <person name="Heidelberg J.F."/>
            <person name="Eisen J.A."/>
            <person name="Nelson W.C."/>
            <person name="Clayton R.A."/>
            <person name="Gwinn M.L."/>
            <person name="Dodson R.J."/>
            <person name="Haft D.H."/>
            <person name="Hickey E.K."/>
            <person name="Peterson J.D."/>
            <person name="Umayam L.A."/>
            <person name="Gill S.R."/>
            <person name="Nelson K.E."/>
            <person name="Read T.D."/>
            <person name="Tettelin H."/>
            <person name="Richardson D.L."/>
            <person name="Ermolaeva M.D."/>
            <person name="Vamathevan J.J."/>
            <person name="Bass S."/>
            <person name="Qin H."/>
            <person name="Dragoi I."/>
            <person name="Sellers P."/>
            <person name="McDonald L.A."/>
            <person name="Utterback T.R."/>
            <person name="Fleischmann R.D."/>
            <person name="Nierman W.C."/>
            <person name="White O."/>
            <person name="Salzberg S.L."/>
            <person name="Smith H.O."/>
            <person name="Colwell R.R."/>
            <person name="Mekalanos J.J."/>
            <person name="Venter J.C."/>
            <person name="Fraser C.M."/>
        </authorList>
    </citation>
    <scope>NUCLEOTIDE SEQUENCE [LARGE SCALE GENOMIC DNA]</scope>
    <source>
        <strain>ATCC 39315 / El Tor Inaba N16961</strain>
    </source>
</reference>
<keyword id="KW-0119">Carbohydrate metabolism</keyword>
<keyword id="KW-0320">Glycogen biosynthesis</keyword>
<keyword id="KW-0321">Glycogen metabolism</keyword>
<keyword id="KW-0328">Glycosyltransferase</keyword>
<keyword id="KW-1185">Reference proteome</keyword>
<keyword id="KW-0808">Transferase</keyword>
<name>GLGB_VIBCH</name>
<sequence length="729" mass="84027">MKITKKPSKVQQFYDQLARAAFADPFSFLGPYIPAEQGALRVWMPGADNVALVVEGQARVALEREGEGGFVLKDGRNLRFTHYQLAVDWAGTEQLLDDPYQYHGLYAEYEDLHTPKQMYHHMGAQFVTLERDGKMVSGVRFLVYAPHAAACSLIGAFNHWDGRRHPMQRLDYGIWGIFIPGLPEGTQYKFELKGPHGEGLPHKADPWGFYAEQYPSFASVTYDHRRYQWQDTAWQQRPVTEKRKQALSFYELHVGSWKRGENGEFLNYRELADQLVPYLVEMGYTHVELMPVAEHPFYGSWGYQPVGLFAPTSRYGSPDDFKYFVDLCHQAGIGVVLDWVPAHFPSDSHGLANFDGTPLFHDPDPRRGWHQDWNSYIYDLGREHVRRFLVANALYWFEMFHIDGIRVDAVASMLYLDYSRSHDQWIPNVDGGRENYDAIATFKWMNEEVYKHFPNAMTIAEESTAFPGVSAPTFMGGLGFGFKWNMGWMHDSLSYIKEDPVHRKYHHNTLTFPLIYAFSENYVLSLSHDEVVYGKRSLMYKMPGDEWQQTANLRAYLGYMYGQPGKKLNFMGTELGQTAEWDHDGQLQWFLTQFERHAGIQRLVRDLNHLYQAQTALHQLDCDPRGFEWRLQDNADLSVIAHERMDEAGNRVLVITNFTPVPQQEFRLGVPKTGKYRLLLNTDAKQYNGSDYPVLQDVSTEAISSEGLDQSLLLSVPPLATLFYQWSAK</sequence>
<feature type="chain" id="PRO_0000188759" description="1,4-alpha-glucan branching enzyme GlgB">
    <location>
        <begin position="1"/>
        <end position="729"/>
    </location>
</feature>
<feature type="active site" description="Nucleophile" evidence="1">
    <location>
        <position position="408"/>
    </location>
</feature>
<feature type="active site" description="Proton donor" evidence="1">
    <location>
        <position position="461"/>
    </location>
</feature>
<protein>
    <recommendedName>
        <fullName evidence="1">1,4-alpha-glucan branching enzyme GlgB</fullName>
        <ecNumber evidence="1">2.4.1.18</ecNumber>
    </recommendedName>
    <alternativeName>
        <fullName evidence="1">1,4-alpha-D-glucan:1,4-alpha-D-glucan 6-glucosyl-transferase</fullName>
    </alternativeName>
    <alternativeName>
        <fullName evidence="1">Alpha-(1-&gt;4)-glucan branching enzyme</fullName>
    </alternativeName>
    <alternativeName>
        <fullName evidence="1">Glycogen branching enzyme</fullName>
        <shortName evidence="1">BE</shortName>
    </alternativeName>
</protein>
<evidence type="ECO:0000255" key="1">
    <source>
        <dbReference type="HAMAP-Rule" id="MF_00685"/>
    </source>
</evidence>
<evidence type="ECO:0000305" key="2"/>
<organism>
    <name type="scientific">Vibrio cholerae serotype O1 (strain ATCC 39315 / El Tor Inaba N16961)</name>
    <dbReference type="NCBI Taxonomy" id="243277"/>
    <lineage>
        <taxon>Bacteria</taxon>
        <taxon>Pseudomonadati</taxon>
        <taxon>Pseudomonadota</taxon>
        <taxon>Gammaproteobacteria</taxon>
        <taxon>Vibrionales</taxon>
        <taxon>Vibrionaceae</taxon>
        <taxon>Vibrio</taxon>
    </lineage>
</organism>
<comment type="function">
    <text evidence="1">Catalyzes the formation of the alpha-1,6-glucosidic linkages in glycogen by scission of a 1,4-alpha-linked oligosaccharide from growing alpha-1,4-glucan chains and the subsequent attachment of the oligosaccharide to the alpha-1,6 position.</text>
</comment>
<comment type="catalytic activity">
    <reaction evidence="1">
        <text>Transfers a segment of a (1-&gt;4)-alpha-D-glucan chain to a primary hydroxy group in a similar glucan chain.</text>
        <dbReference type="EC" id="2.4.1.18"/>
    </reaction>
</comment>
<comment type="pathway">
    <text evidence="1">Glycan biosynthesis; glycogen biosynthesis.</text>
</comment>
<comment type="subunit">
    <text evidence="1">Monomer.</text>
</comment>
<comment type="similarity">
    <text evidence="1">Belongs to the glycosyl hydrolase 13 family. GlgB subfamily.</text>
</comment>
<comment type="sequence caution" evidence="2">
    <conflict type="frameshift">
        <sequence resource="EMBL-CDS" id="AAF95929"/>
    </conflict>
</comment>
<comment type="sequence caution" evidence="2">
    <conflict type="frameshift">
        <sequence resource="EMBL-CDS" id="AAF95930"/>
    </conflict>
</comment>
<proteinExistence type="inferred from homology"/>
<dbReference type="EC" id="2.4.1.18" evidence="1"/>
<dbReference type="EMBL" id="AE003853">
    <property type="protein sequence ID" value="AAF95929.1"/>
    <property type="status" value="ALT_FRAME"/>
    <property type="molecule type" value="Genomic_DNA"/>
</dbReference>
<dbReference type="EMBL" id="AE003853">
    <property type="protein sequence ID" value="AAF95930.1"/>
    <property type="status" value="ALT_FRAME"/>
    <property type="molecule type" value="Genomic_DNA"/>
</dbReference>
<dbReference type="PIR" id="D82511">
    <property type="entry name" value="D82511"/>
</dbReference>
<dbReference type="RefSeq" id="WP_000705042.1">
    <property type="nucleotide sequence ID" value="NZ_LT906615.1"/>
</dbReference>
<dbReference type="SMR" id="Q9KNE8"/>
<dbReference type="STRING" id="243277.VC_A0016"/>
<dbReference type="CAZy" id="CBM48">
    <property type="family name" value="Carbohydrate-Binding Module Family 48"/>
</dbReference>
<dbReference type="CAZy" id="GH13">
    <property type="family name" value="Glycoside Hydrolase Family 13"/>
</dbReference>
<dbReference type="DNASU" id="2612506"/>
<dbReference type="EnsemblBacteria" id="AAF95929">
    <property type="protein sequence ID" value="AAF95929"/>
    <property type="gene ID" value="VC_A0015"/>
</dbReference>
<dbReference type="EnsemblBacteria" id="AAF95930">
    <property type="protein sequence ID" value="AAF95930"/>
    <property type="gene ID" value="VC_A0016"/>
</dbReference>
<dbReference type="KEGG" id="vch:VC_A0015"/>
<dbReference type="KEGG" id="vch:VC_A0016"/>
<dbReference type="eggNOG" id="COG0296">
    <property type="taxonomic scope" value="Bacteria"/>
</dbReference>
<dbReference type="HOGENOM" id="CLU_2653510_0_0_6"/>
<dbReference type="UniPathway" id="UPA00164"/>
<dbReference type="Proteomes" id="UP000000584">
    <property type="component" value="Chromosome 2"/>
</dbReference>
<dbReference type="GO" id="GO:0005737">
    <property type="term" value="C:cytoplasm"/>
    <property type="evidence" value="ECO:0000318"/>
    <property type="project" value="GO_Central"/>
</dbReference>
<dbReference type="GO" id="GO:0005829">
    <property type="term" value="C:cytosol"/>
    <property type="evidence" value="ECO:0000318"/>
    <property type="project" value="GO_Central"/>
</dbReference>
<dbReference type="GO" id="GO:0003844">
    <property type="term" value="F:1,4-alpha-glucan branching enzyme activity"/>
    <property type="evidence" value="ECO:0000318"/>
    <property type="project" value="GO_Central"/>
</dbReference>
<dbReference type="GO" id="GO:0043169">
    <property type="term" value="F:cation binding"/>
    <property type="evidence" value="ECO:0007669"/>
    <property type="project" value="InterPro"/>
</dbReference>
<dbReference type="GO" id="GO:0004553">
    <property type="term" value="F:hydrolase activity, hydrolyzing O-glycosyl compounds"/>
    <property type="evidence" value="ECO:0007669"/>
    <property type="project" value="InterPro"/>
</dbReference>
<dbReference type="GO" id="GO:0005978">
    <property type="term" value="P:glycogen biosynthetic process"/>
    <property type="evidence" value="ECO:0000318"/>
    <property type="project" value="GO_Central"/>
</dbReference>
<dbReference type="CDD" id="cd11322">
    <property type="entry name" value="AmyAc_Glg_BE"/>
    <property type="match status" value="1"/>
</dbReference>
<dbReference type="CDD" id="cd02855">
    <property type="entry name" value="E_set_GBE_prok_N"/>
    <property type="match status" value="1"/>
</dbReference>
<dbReference type="FunFam" id="2.60.40.10:FF:003042">
    <property type="entry name" value="1,4-alpha-glucan branching enzyme GlgB"/>
    <property type="match status" value="1"/>
</dbReference>
<dbReference type="FunFam" id="2.60.40.1180:FF:000002">
    <property type="entry name" value="1,4-alpha-glucan branching enzyme GlgB"/>
    <property type="match status" value="1"/>
</dbReference>
<dbReference type="FunFam" id="3.20.20.80:FF:000003">
    <property type="entry name" value="1,4-alpha-glucan branching enzyme GlgB"/>
    <property type="match status" value="1"/>
</dbReference>
<dbReference type="Gene3D" id="3.20.20.80">
    <property type="entry name" value="Glycosidases"/>
    <property type="match status" value="1"/>
</dbReference>
<dbReference type="Gene3D" id="2.60.40.1180">
    <property type="entry name" value="Golgi alpha-mannosidase II"/>
    <property type="match status" value="1"/>
</dbReference>
<dbReference type="Gene3D" id="2.60.40.10">
    <property type="entry name" value="Immunoglobulins"/>
    <property type="match status" value="2"/>
</dbReference>
<dbReference type="HAMAP" id="MF_00685">
    <property type="entry name" value="GlgB"/>
    <property type="match status" value="1"/>
</dbReference>
<dbReference type="InterPro" id="IPR006048">
    <property type="entry name" value="A-amylase/branching_C"/>
</dbReference>
<dbReference type="InterPro" id="IPR037439">
    <property type="entry name" value="Branching_enzy"/>
</dbReference>
<dbReference type="InterPro" id="IPR006407">
    <property type="entry name" value="GlgB"/>
</dbReference>
<dbReference type="InterPro" id="IPR054169">
    <property type="entry name" value="GlgB_N"/>
</dbReference>
<dbReference type="InterPro" id="IPR044143">
    <property type="entry name" value="GlgB_N_E_set_prok"/>
</dbReference>
<dbReference type="InterPro" id="IPR006047">
    <property type="entry name" value="Glyco_hydro_13_cat_dom"/>
</dbReference>
<dbReference type="InterPro" id="IPR004193">
    <property type="entry name" value="Glyco_hydro_13_N"/>
</dbReference>
<dbReference type="InterPro" id="IPR013780">
    <property type="entry name" value="Glyco_hydro_b"/>
</dbReference>
<dbReference type="InterPro" id="IPR017853">
    <property type="entry name" value="Glycoside_hydrolase_SF"/>
</dbReference>
<dbReference type="InterPro" id="IPR013783">
    <property type="entry name" value="Ig-like_fold"/>
</dbReference>
<dbReference type="InterPro" id="IPR014756">
    <property type="entry name" value="Ig_E-set"/>
</dbReference>
<dbReference type="NCBIfam" id="TIGR01515">
    <property type="entry name" value="branching_enzym"/>
    <property type="match status" value="1"/>
</dbReference>
<dbReference type="NCBIfam" id="NF003811">
    <property type="entry name" value="PRK05402.1"/>
    <property type="match status" value="1"/>
</dbReference>
<dbReference type="NCBIfam" id="NF008967">
    <property type="entry name" value="PRK12313.1"/>
    <property type="match status" value="1"/>
</dbReference>
<dbReference type="PANTHER" id="PTHR43651">
    <property type="entry name" value="1,4-ALPHA-GLUCAN-BRANCHING ENZYME"/>
    <property type="match status" value="1"/>
</dbReference>
<dbReference type="PANTHER" id="PTHR43651:SF3">
    <property type="entry name" value="1,4-ALPHA-GLUCAN-BRANCHING ENZYME"/>
    <property type="match status" value="1"/>
</dbReference>
<dbReference type="Pfam" id="PF00128">
    <property type="entry name" value="Alpha-amylase"/>
    <property type="match status" value="1"/>
</dbReference>
<dbReference type="Pfam" id="PF02806">
    <property type="entry name" value="Alpha-amylase_C"/>
    <property type="match status" value="1"/>
</dbReference>
<dbReference type="Pfam" id="PF02922">
    <property type="entry name" value="CBM_48"/>
    <property type="match status" value="1"/>
</dbReference>
<dbReference type="Pfam" id="PF22019">
    <property type="entry name" value="GlgB_N"/>
    <property type="match status" value="1"/>
</dbReference>
<dbReference type="PIRSF" id="PIRSF000463">
    <property type="entry name" value="GlgB"/>
    <property type="match status" value="1"/>
</dbReference>
<dbReference type="SMART" id="SM00642">
    <property type="entry name" value="Aamy"/>
    <property type="match status" value="1"/>
</dbReference>
<dbReference type="SUPFAM" id="SSF51445">
    <property type="entry name" value="(Trans)glycosidases"/>
    <property type="match status" value="1"/>
</dbReference>
<dbReference type="SUPFAM" id="SSF81296">
    <property type="entry name" value="E set domains"/>
    <property type="match status" value="2"/>
</dbReference>
<dbReference type="SUPFAM" id="SSF51011">
    <property type="entry name" value="Glycosyl hydrolase domain"/>
    <property type="match status" value="1"/>
</dbReference>
<accession>Q9KNE8</accession>
<accession>Q9KNE9</accession>